<sequence>MIEFKKPNITVVDQEDSYGKFVVEPLERGFGTTLGNSLRRVLLTSVPGTGLVKVKIDGILHEFTTVPGVKEDVTKIILNLKKLELRAYTEEVKTIELDVEGPATVTAEDLKADADVEVLNPDQYICTIAQGGHLHMWIDVCNGRGYVPASENKTAEMSIGDIPVDSLFSPIEKVNYQVESTRVGKREDFDKLTLEIWTNGSIAPNDALNFAARVLVEHFKAFESADAAAEIGEVMVEQENDQKEKKLEMTIEDLDLSVRSYNCLKRAGINTLQDLTVKSEAEMMRVRNLGRKSLEEVKNKLADLGLSLRQED</sequence>
<dbReference type="EC" id="2.7.7.6" evidence="1"/>
<dbReference type="EMBL" id="CR954253">
    <property type="protein sequence ID" value="CAI97257.1"/>
    <property type="molecule type" value="Genomic_DNA"/>
</dbReference>
<dbReference type="RefSeq" id="WP_011543644.1">
    <property type="nucleotide sequence ID" value="NC_008054.1"/>
</dbReference>
<dbReference type="SMR" id="Q1GBJ2"/>
<dbReference type="STRING" id="390333.Ldb0422"/>
<dbReference type="KEGG" id="ldb:Ldb0422"/>
<dbReference type="PATRIC" id="fig|390333.13.peg.370"/>
<dbReference type="eggNOG" id="COG0202">
    <property type="taxonomic scope" value="Bacteria"/>
</dbReference>
<dbReference type="HOGENOM" id="CLU_053084_0_1_9"/>
<dbReference type="BioCyc" id="LDEL390333:LDB_RS01795-MONOMER"/>
<dbReference type="Proteomes" id="UP000001259">
    <property type="component" value="Chromosome"/>
</dbReference>
<dbReference type="GO" id="GO:0005737">
    <property type="term" value="C:cytoplasm"/>
    <property type="evidence" value="ECO:0007669"/>
    <property type="project" value="UniProtKB-ARBA"/>
</dbReference>
<dbReference type="GO" id="GO:0000428">
    <property type="term" value="C:DNA-directed RNA polymerase complex"/>
    <property type="evidence" value="ECO:0007669"/>
    <property type="project" value="UniProtKB-KW"/>
</dbReference>
<dbReference type="GO" id="GO:0003677">
    <property type="term" value="F:DNA binding"/>
    <property type="evidence" value="ECO:0007669"/>
    <property type="project" value="UniProtKB-UniRule"/>
</dbReference>
<dbReference type="GO" id="GO:0003899">
    <property type="term" value="F:DNA-directed RNA polymerase activity"/>
    <property type="evidence" value="ECO:0007669"/>
    <property type="project" value="UniProtKB-UniRule"/>
</dbReference>
<dbReference type="GO" id="GO:0046983">
    <property type="term" value="F:protein dimerization activity"/>
    <property type="evidence" value="ECO:0007669"/>
    <property type="project" value="InterPro"/>
</dbReference>
<dbReference type="GO" id="GO:0006351">
    <property type="term" value="P:DNA-templated transcription"/>
    <property type="evidence" value="ECO:0007669"/>
    <property type="project" value="UniProtKB-UniRule"/>
</dbReference>
<dbReference type="CDD" id="cd06928">
    <property type="entry name" value="RNAP_alpha_NTD"/>
    <property type="match status" value="1"/>
</dbReference>
<dbReference type="FunFam" id="1.10.150.20:FF:000001">
    <property type="entry name" value="DNA-directed RNA polymerase subunit alpha"/>
    <property type="match status" value="1"/>
</dbReference>
<dbReference type="FunFam" id="2.170.120.12:FF:000001">
    <property type="entry name" value="DNA-directed RNA polymerase subunit alpha"/>
    <property type="match status" value="1"/>
</dbReference>
<dbReference type="Gene3D" id="1.10.150.20">
    <property type="entry name" value="5' to 3' exonuclease, C-terminal subdomain"/>
    <property type="match status" value="1"/>
</dbReference>
<dbReference type="Gene3D" id="2.170.120.12">
    <property type="entry name" value="DNA-directed RNA polymerase, insert domain"/>
    <property type="match status" value="1"/>
</dbReference>
<dbReference type="Gene3D" id="3.30.1360.10">
    <property type="entry name" value="RNA polymerase, RBP11-like subunit"/>
    <property type="match status" value="1"/>
</dbReference>
<dbReference type="HAMAP" id="MF_00059">
    <property type="entry name" value="RNApol_bact_RpoA"/>
    <property type="match status" value="1"/>
</dbReference>
<dbReference type="InterPro" id="IPR011262">
    <property type="entry name" value="DNA-dir_RNA_pol_insert"/>
</dbReference>
<dbReference type="InterPro" id="IPR011263">
    <property type="entry name" value="DNA-dir_RNA_pol_RpoA/D/Rpb3"/>
</dbReference>
<dbReference type="InterPro" id="IPR011773">
    <property type="entry name" value="DNA-dir_RpoA"/>
</dbReference>
<dbReference type="InterPro" id="IPR036603">
    <property type="entry name" value="RBP11-like"/>
</dbReference>
<dbReference type="InterPro" id="IPR011260">
    <property type="entry name" value="RNAP_asu_C"/>
</dbReference>
<dbReference type="InterPro" id="IPR036643">
    <property type="entry name" value="RNApol_insert_sf"/>
</dbReference>
<dbReference type="NCBIfam" id="NF003513">
    <property type="entry name" value="PRK05182.1-2"/>
    <property type="match status" value="1"/>
</dbReference>
<dbReference type="NCBIfam" id="NF003515">
    <property type="entry name" value="PRK05182.2-1"/>
    <property type="match status" value="1"/>
</dbReference>
<dbReference type="NCBIfam" id="NF003519">
    <property type="entry name" value="PRK05182.2-5"/>
    <property type="match status" value="1"/>
</dbReference>
<dbReference type="NCBIfam" id="TIGR02027">
    <property type="entry name" value="rpoA"/>
    <property type="match status" value="1"/>
</dbReference>
<dbReference type="Pfam" id="PF01000">
    <property type="entry name" value="RNA_pol_A_bac"/>
    <property type="match status" value="1"/>
</dbReference>
<dbReference type="Pfam" id="PF03118">
    <property type="entry name" value="RNA_pol_A_CTD"/>
    <property type="match status" value="1"/>
</dbReference>
<dbReference type="Pfam" id="PF01193">
    <property type="entry name" value="RNA_pol_L"/>
    <property type="match status" value="1"/>
</dbReference>
<dbReference type="SMART" id="SM00662">
    <property type="entry name" value="RPOLD"/>
    <property type="match status" value="1"/>
</dbReference>
<dbReference type="SUPFAM" id="SSF47789">
    <property type="entry name" value="C-terminal domain of RNA polymerase alpha subunit"/>
    <property type="match status" value="1"/>
</dbReference>
<dbReference type="SUPFAM" id="SSF56553">
    <property type="entry name" value="Insert subdomain of RNA polymerase alpha subunit"/>
    <property type="match status" value="1"/>
</dbReference>
<dbReference type="SUPFAM" id="SSF55257">
    <property type="entry name" value="RBP11-like subunits of RNA polymerase"/>
    <property type="match status" value="1"/>
</dbReference>
<gene>
    <name evidence="1" type="primary">rpoA</name>
    <name type="ordered locus">Ldb0422</name>
</gene>
<feature type="chain" id="PRO_0000264509" description="DNA-directed RNA polymerase subunit alpha">
    <location>
        <begin position="1"/>
        <end position="312"/>
    </location>
</feature>
<feature type="region of interest" description="Alpha N-terminal domain (alpha-NTD)" evidence="1">
    <location>
        <begin position="1"/>
        <end position="226"/>
    </location>
</feature>
<feature type="region of interest" description="Alpha C-terminal domain (alpha-CTD)" evidence="1">
    <location>
        <begin position="243"/>
        <end position="312"/>
    </location>
</feature>
<protein>
    <recommendedName>
        <fullName evidence="1">DNA-directed RNA polymerase subunit alpha</fullName>
        <shortName evidence="1">RNAP subunit alpha</shortName>
        <ecNumber evidence="1">2.7.7.6</ecNumber>
    </recommendedName>
    <alternativeName>
        <fullName evidence="1">RNA polymerase subunit alpha</fullName>
    </alternativeName>
    <alternativeName>
        <fullName evidence="1">Transcriptase subunit alpha</fullName>
    </alternativeName>
</protein>
<name>RPOA_LACDA</name>
<evidence type="ECO:0000255" key="1">
    <source>
        <dbReference type="HAMAP-Rule" id="MF_00059"/>
    </source>
</evidence>
<accession>Q1GBJ2</accession>
<proteinExistence type="inferred from homology"/>
<reference key="1">
    <citation type="journal article" date="2006" name="Proc. Natl. Acad. Sci. U.S.A.">
        <title>The complete genome sequence of Lactobacillus bulgaricus reveals extensive and ongoing reductive evolution.</title>
        <authorList>
            <person name="van de Guchte M."/>
            <person name="Penaud S."/>
            <person name="Grimaldi C."/>
            <person name="Barbe V."/>
            <person name="Bryson K."/>
            <person name="Nicolas P."/>
            <person name="Robert C."/>
            <person name="Oztas S."/>
            <person name="Mangenot S."/>
            <person name="Couloux A."/>
            <person name="Loux V."/>
            <person name="Dervyn R."/>
            <person name="Bossy R."/>
            <person name="Bolotin A."/>
            <person name="Batto J.-M."/>
            <person name="Walunas T."/>
            <person name="Gibrat J.-F."/>
            <person name="Bessieres P."/>
            <person name="Weissenbach J."/>
            <person name="Ehrlich S.D."/>
            <person name="Maguin E."/>
        </authorList>
    </citation>
    <scope>NUCLEOTIDE SEQUENCE [LARGE SCALE GENOMIC DNA]</scope>
    <source>
        <strain>ATCC 11842 / DSM 20081 / BCRC 10696 / JCM 1002 / NBRC 13953 / NCIMB 11778 / NCTC 12712 / WDCM 00102 / Lb 14</strain>
    </source>
</reference>
<keyword id="KW-0240">DNA-directed RNA polymerase</keyword>
<keyword id="KW-0548">Nucleotidyltransferase</keyword>
<keyword id="KW-1185">Reference proteome</keyword>
<keyword id="KW-0804">Transcription</keyword>
<keyword id="KW-0808">Transferase</keyword>
<organism>
    <name type="scientific">Lactobacillus delbrueckii subsp. bulgaricus (strain ATCC 11842 / DSM 20081 / BCRC 10696 / JCM 1002 / NBRC 13953 / NCIMB 11778 / NCTC 12712 / WDCM 00102 / Lb 14)</name>
    <dbReference type="NCBI Taxonomy" id="390333"/>
    <lineage>
        <taxon>Bacteria</taxon>
        <taxon>Bacillati</taxon>
        <taxon>Bacillota</taxon>
        <taxon>Bacilli</taxon>
        <taxon>Lactobacillales</taxon>
        <taxon>Lactobacillaceae</taxon>
        <taxon>Lactobacillus</taxon>
    </lineage>
</organism>
<comment type="function">
    <text evidence="1">DNA-dependent RNA polymerase catalyzes the transcription of DNA into RNA using the four ribonucleoside triphosphates as substrates.</text>
</comment>
<comment type="catalytic activity">
    <reaction evidence="1">
        <text>RNA(n) + a ribonucleoside 5'-triphosphate = RNA(n+1) + diphosphate</text>
        <dbReference type="Rhea" id="RHEA:21248"/>
        <dbReference type="Rhea" id="RHEA-COMP:14527"/>
        <dbReference type="Rhea" id="RHEA-COMP:17342"/>
        <dbReference type="ChEBI" id="CHEBI:33019"/>
        <dbReference type="ChEBI" id="CHEBI:61557"/>
        <dbReference type="ChEBI" id="CHEBI:140395"/>
        <dbReference type="EC" id="2.7.7.6"/>
    </reaction>
</comment>
<comment type="subunit">
    <text evidence="1">Homodimer. The RNAP catalytic core consists of 2 alpha, 1 beta, 1 beta' and 1 omega subunit. When a sigma factor is associated with the core the holoenzyme is formed, which can initiate transcription.</text>
</comment>
<comment type="domain">
    <text evidence="1">The N-terminal domain is essential for RNAP assembly and basal transcription, whereas the C-terminal domain is involved in interaction with transcriptional regulators and with upstream promoter elements.</text>
</comment>
<comment type="similarity">
    <text evidence="1">Belongs to the RNA polymerase alpha chain family.</text>
</comment>